<gene>
    <name evidence="1" type="primary">ldh1</name>
    <name type="synonym">ldh</name>
    <name type="ordered locus">CA_C0267</name>
</gene>
<protein>
    <recommendedName>
        <fullName evidence="1">L-lactate dehydrogenase 1</fullName>
        <shortName evidence="1">L-LDH 1</shortName>
        <ecNumber evidence="1">1.1.1.27</ecNumber>
    </recommendedName>
</protein>
<sequence>MKKNTKISVIGAGFVGSSTVFALMNGGLASEIVIVDVNKDKAEGEAMDLSHGAAFVKPVVVKSGDYKDTEGSDIVIITAGAAQKPGETRLELINKNYNIFKSIVPEVVKYNPNAILLVVSNPVDILTYITYKLSGFPKSRVIGSGTVLDTSRFRYMLSEHFEIDVRNIHTYIMGEHGDSEIATWSLTNIAGMDVNEYCEASCKKCDGSLKYKIYDDVKNAAYHVIEKKGATYYAVALAVKRIVEAILRDENSILTVSSLLEGQYGIKDVYMGVPSIVGINGVKDIIEVPLNDEEKNNLTDSAKTLKESLDSIF</sequence>
<organism>
    <name type="scientific">Clostridium acetobutylicum (strain ATCC 824 / DSM 792 / JCM 1419 / IAM 19013 / LMG 5710 / NBRC 13948 / NRRL B-527 / VKM B-1787 / 2291 / W)</name>
    <dbReference type="NCBI Taxonomy" id="272562"/>
    <lineage>
        <taxon>Bacteria</taxon>
        <taxon>Bacillati</taxon>
        <taxon>Bacillota</taxon>
        <taxon>Clostridia</taxon>
        <taxon>Eubacteriales</taxon>
        <taxon>Clostridiaceae</taxon>
        <taxon>Clostridium</taxon>
    </lineage>
</organism>
<keyword id="KW-0021">Allosteric enzyme</keyword>
<keyword id="KW-0963">Cytoplasm</keyword>
<keyword id="KW-0520">NAD</keyword>
<keyword id="KW-0560">Oxidoreductase</keyword>
<keyword id="KW-0597">Phosphoprotein</keyword>
<keyword id="KW-1185">Reference proteome</keyword>
<evidence type="ECO:0000255" key="1">
    <source>
        <dbReference type="HAMAP-Rule" id="MF_00488"/>
    </source>
</evidence>
<evidence type="ECO:0000305" key="2"/>
<reference key="1">
    <citation type="journal article" date="2001" name="J. Bacteriol.">
        <title>Genome sequence and comparative analysis of the solvent-producing bacterium Clostridium acetobutylicum.</title>
        <authorList>
            <person name="Noelling J."/>
            <person name="Breton G."/>
            <person name="Omelchenko M.V."/>
            <person name="Makarova K.S."/>
            <person name="Zeng Q."/>
            <person name="Gibson R."/>
            <person name="Lee H.M."/>
            <person name="Dubois J."/>
            <person name="Qiu D."/>
            <person name="Hitti J."/>
            <person name="Wolf Y.I."/>
            <person name="Tatusov R.L."/>
            <person name="Sabathe F."/>
            <person name="Doucette-Stamm L.A."/>
            <person name="Soucaille P."/>
            <person name="Daly M.J."/>
            <person name="Bennett G.N."/>
            <person name="Koonin E.V."/>
            <person name="Smith D.R."/>
        </authorList>
    </citation>
    <scope>NUCLEOTIDE SEQUENCE [LARGE SCALE GENOMIC DNA]</scope>
    <source>
        <strain>ATCC 824 / DSM 792 / JCM 1419 / IAM 19013 / LMG 5710 / NBRC 13948 / NRRL B-527 / VKM B-1787 / 2291 / W</strain>
    </source>
</reference>
<feature type="chain" id="PRO_0000168333" description="L-lactate dehydrogenase 1">
    <location>
        <begin position="1"/>
        <end position="313"/>
    </location>
</feature>
<feature type="active site" description="Proton acceptor" evidence="1">
    <location>
        <position position="176"/>
    </location>
</feature>
<feature type="binding site" evidence="1">
    <location>
        <position position="15"/>
    </location>
    <ligand>
        <name>NAD(+)</name>
        <dbReference type="ChEBI" id="CHEBI:57540"/>
    </ligand>
</feature>
<feature type="binding site" evidence="1">
    <location>
        <position position="36"/>
    </location>
    <ligand>
        <name>NAD(+)</name>
        <dbReference type="ChEBI" id="CHEBI:57540"/>
    </ligand>
</feature>
<feature type="binding site" evidence="1">
    <location>
        <position position="41"/>
    </location>
    <ligand>
        <name>NAD(+)</name>
        <dbReference type="ChEBI" id="CHEBI:57540"/>
    </ligand>
</feature>
<feature type="binding site" evidence="1">
    <location>
        <position position="66"/>
    </location>
    <ligand>
        <name>NAD(+)</name>
        <dbReference type="ChEBI" id="CHEBI:57540"/>
    </ligand>
</feature>
<feature type="binding site" evidence="1">
    <location>
        <begin position="80"/>
        <end position="81"/>
    </location>
    <ligand>
        <name>NAD(+)</name>
        <dbReference type="ChEBI" id="CHEBI:57540"/>
    </ligand>
</feature>
<feature type="binding site" evidence="1">
    <location>
        <position position="83"/>
    </location>
    <ligand>
        <name>substrate</name>
    </ligand>
</feature>
<feature type="binding site" evidence="1">
    <location>
        <position position="89"/>
    </location>
    <ligand>
        <name>substrate</name>
    </ligand>
</feature>
<feature type="binding site" evidence="1">
    <location>
        <position position="102"/>
    </location>
    <ligand>
        <name>NAD(+)</name>
        <dbReference type="ChEBI" id="CHEBI:57540"/>
    </ligand>
</feature>
<feature type="binding site" evidence="1">
    <location>
        <begin position="119"/>
        <end position="121"/>
    </location>
    <ligand>
        <name>NAD(+)</name>
        <dbReference type="ChEBI" id="CHEBI:57540"/>
    </ligand>
</feature>
<feature type="binding site" evidence="1">
    <location>
        <begin position="121"/>
        <end position="124"/>
    </location>
    <ligand>
        <name>substrate</name>
    </ligand>
</feature>
<feature type="binding site" evidence="1">
    <location>
        <position position="144"/>
    </location>
    <ligand>
        <name>NAD(+)</name>
        <dbReference type="ChEBI" id="CHEBI:57540"/>
    </ligand>
</feature>
<feature type="binding site" evidence="1">
    <location>
        <begin position="149"/>
        <end position="152"/>
    </location>
    <ligand>
        <name>substrate</name>
    </ligand>
</feature>
<feature type="binding site" evidence="1">
    <location>
        <position position="154"/>
    </location>
    <ligand>
        <name>beta-D-fructose 1,6-bisphosphate</name>
        <dbReference type="ChEBI" id="CHEBI:32966"/>
        <note>allosteric activator</note>
    </ligand>
</feature>
<feature type="binding site" evidence="1">
    <location>
        <position position="169"/>
    </location>
    <ligand>
        <name>beta-D-fructose 1,6-bisphosphate</name>
        <dbReference type="ChEBI" id="CHEBI:32966"/>
        <note>allosteric activator</note>
    </ligand>
</feature>
<feature type="binding site" evidence="1">
    <location>
        <position position="231"/>
    </location>
    <ligand>
        <name>substrate</name>
    </ligand>
</feature>
<feature type="modified residue" description="Phosphotyrosine" evidence="1">
    <location>
        <position position="222"/>
    </location>
</feature>
<name>LDH1_CLOAB</name>
<accession>Q97MD1</accession>
<comment type="function">
    <text evidence="1">Catalyzes the conversion of lactate to pyruvate.</text>
</comment>
<comment type="catalytic activity">
    <reaction evidence="1">
        <text>(S)-lactate + NAD(+) = pyruvate + NADH + H(+)</text>
        <dbReference type="Rhea" id="RHEA:23444"/>
        <dbReference type="ChEBI" id="CHEBI:15361"/>
        <dbReference type="ChEBI" id="CHEBI:15378"/>
        <dbReference type="ChEBI" id="CHEBI:16651"/>
        <dbReference type="ChEBI" id="CHEBI:57540"/>
        <dbReference type="ChEBI" id="CHEBI:57945"/>
        <dbReference type="EC" id="1.1.1.27"/>
    </reaction>
</comment>
<comment type="activity regulation">
    <text evidence="1">Allosterically activated by fructose 1,6-bisphosphate (FBP).</text>
</comment>
<comment type="pathway">
    <text evidence="1">Fermentation; pyruvate fermentation to lactate; (S)-lactate from pyruvate: step 1/1.</text>
</comment>
<comment type="subunit">
    <text evidence="1">Homotetramer.</text>
</comment>
<comment type="subcellular location">
    <subcellularLocation>
        <location evidence="1">Cytoplasm</location>
    </subcellularLocation>
</comment>
<comment type="similarity">
    <text evidence="1 2">Belongs to the LDH/MDH superfamily. LDH family.</text>
</comment>
<proteinExistence type="inferred from homology"/>
<dbReference type="EC" id="1.1.1.27" evidence="1"/>
<dbReference type="EMBL" id="AE001437">
    <property type="protein sequence ID" value="AAK78248.1"/>
    <property type="molecule type" value="Genomic_DNA"/>
</dbReference>
<dbReference type="PIR" id="E96932">
    <property type="entry name" value="E96932"/>
</dbReference>
<dbReference type="RefSeq" id="NP_346908.1">
    <property type="nucleotide sequence ID" value="NC_003030.1"/>
</dbReference>
<dbReference type="RefSeq" id="WP_010963590.1">
    <property type="nucleotide sequence ID" value="NC_003030.1"/>
</dbReference>
<dbReference type="SMR" id="Q97MD1"/>
<dbReference type="STRING" id="272562.CA_C0267"/>
<dbReference type="KEGG" id="cac:CA_C0267"/>
<dbReference type="PATRIC" id="fig|272562.8.peg.453"/>
<dbReference type="eggNOG" id="COG0039">
    <property type="taxonomic scope" value="Bacteria"/>
</dbReference>
<dbReference type="HOGENOM" id="CLU_045401_1_1_9"/>
<dbReference type="OrthoDB" id="9802969at2"/>
<dbReference type="UniPathway" id="UPA00554">
    <property type="reaction ID" value="UER00611"/>
</dbReference>
<dbReference type="Proteomes" id="UP000000814">
    <property type="component" value="Chromosome"/>
</dbReference>
<dbReference type="GO" id="GO:0005737">
    <property type="term" value="C:cytoplasm"/>
    <property type="evidence" value="ECO:0007669"/>
    <property type="project" value="UniProtKB-SubCell"/>
</dbReference>
<dbReference type="GO" id="GO:0004459">
    <property type="term" value="F:L-lactate dehydrogenase activity"/>
    <property type="evidence" value="ECO:0007669"/>
    <property type="project" value="UniProtKB-UniRule"/>
</dbReference>
<dbReference type="GO" id="GO:0006096">
    <property type="term" value="P:glycolytic process"/>
    <property type="evidence" value="ECO:0007669"/>
    <property type="project" value="UniProtKB-UniRule"/>
</dbReference>
<dbReference type="GO" id="GO:0006089">
    <property type="term" value="P:lactate metabolic process"/>
    <property type="evidence" value="ECO:0007669"/>
    <property type="project" value="TreeGrafter"/>
</dbReference>
<dbReference type="CDD" id="cd05292">
    <property type="entry name" value="LDH_2"/>
    <property type="match status" value="1"/>
</dbReference>
<dbReference type="FunFam" id="3.40.50.720:FF:000018">
    <property type="entry name" value="Malate dehydrogenase"/>
    <property type="match status" value="1"/>
</dbReference>
<dbReference type="Gene3D" id="3.90.110.10">
    <property type="entry name" value="Lactate dehydrogenase/glycoside hydrolase, family 4, C-terminal"/>
    <property type="match status" value="1"/>
</dbReference>
<dbReference type="Gene3D" id="3.40.50.720">
    <property type="entry name" value="NAD(P)-binding Rossmann-like Domain"/>
    <property type="match status" value="1"/>
</dbReference>
<dbReference type="HAMAP" id="MF_00488">
    <property type="entry name" value="Lactate_dehydrog"/>
    <property type="match status" value="1"/>
</dbReference>
<dbReference type="InterPro" id="IPR001557">
    <property type="entry name" value="L-lactate/malate_DH"/>
</dbReference>
<dbReference type="InterPro" id="IPR011304">
    <property type="entry name" value="L-lactate_DH"/>
</dbReference>
<dbReference type="InterPro" id="IPR018177">
    <property type="entry name" value="L-lactate_DH_AS"/>
</dbReference>
<dbReference type="InterPro" id="IPR022383">
    <property type="entry name" value="Lactate/malate_DH_C"/>
</dbReference>
<dbReference type="InterPro" id="IPR001236">
    <property type="entry name" value="Lactate/malate_DH_N"/>
</dbReference>
<dbReference type="InterPro" id="IPR015955">
    <property type="entry name" value="Lactate_DH/Glyco_Ohase_4_C"/>
</dbReference>
<dbReference type="InterPro" id="IPR036291">
    <property type="entry name" value="NAD(P)-bd_dom_sf"/>
</dbReference>
<dbReference type="NCBIfam" id="TIGR01771">
    <property type="entry name" value="L-LDH-NAD"/>
    <property type="match status" value="1"/>
</dbReference>
<dbReference type="NCBIfam" id="NF000824">
    <property type="entry name" value="PRK00066.1"/>
    <property type="match status" value="1"/>
</dbReference>
<dbReference type="NCBIfam" id="NF004863">
    <property type="entry name" value="PRK06223.1"/>
    <property type="match status" value="1"/>
</dbReference>
<dbReference type="PANTHER" id="PTHR43128">
    <property type="entry name" value="L-2-HYDROXYCARBOXYLATE DEHYDROGENASE (NAD(P)(+))"/>
    <property type="match status" value="1"/>
</dbReference>
<dbReference type="PANTHER" id="PTHR43128:SF16">
    <property type="entry name" value="L-LACTATE DEHYDROGENASE"/>
    <property type="match status" value="1"/>
</dbReference>
<dbReference type="Pfam" id="PF02866">
    <property type="entry name" value="Ldh_1_C"/>
    <property type="match status" value="1"/>
</dbReference>
<dbReference type="Pfam" id="PF00056">
    <property type="entry name" value="Ldh_1_N"/>
    <property type="match status" value="1"/>
</dbReference>
<dbReference type="PIRSF" id="PIRSF000102">
    <property type="entry name" value="Lac_mal_DH"/>
    <property type="match status" value="1"/>
</dbReference>
<dbReference type="PRINTS" id="PR00086">
    <property type="entry name" value="LLDHDRGNASE"/>
</dbReference>
<dbReference type="SUPFAM" id="SSF56327">
    <property type="entry name" value="LDH C-terminal domain-like"/>
    <property type="match status" value="1"/>
</dbReference>
<dbReference type="SUPFAM" id="SSF51735">
    <property type="entry name" value="NAD(P)-binding Rossmann-fold domains"/>
    <property type="match status" value="1"/>
</dbReference>
<dbReference type="PROSITE" id="PS00064">
    <property type="entry name" value="L_LDH"/>
    <property type="match status" value="1"/>
</dbReference>